<accession>Q2TXB7</accession>
<keyword id="KW-0119">Carbohydrate metabolism</keyword>
<keyword id="KW-0326">Glycosidase</keyword>
<keyword id="KW-0378">Hydrolase</keyword>
<keyword id="KW-0624">Polysaccharide degradation</keyword>
<keyword id="KW-1185">Reference proteome</keyword>
<reference key="1">
    <citation type="journal article" date="2005" name="Nature">
        <title>Genome sequencing and analysis of Aspergillus oryzae.</title>
        <authorList>
            <person name="Machida M."/>
            <person name="Asai K."/>
            <person name="Sano M."/>
            <person name="Tanaka T."/>
            <person name="Kumagai T."/>
            <person name="Terai G."/>
            <person name="Kusumoto K."/>
            <person name="Arima T."/>
            <person name="Akita O."/>
            <person name="Kashiwagi Y."/>
            <person name="Abe K."/>
            <person name="Gomi K."/>
            <person name="Horiuchi H."/>
            <person name="Kitamoto K."/>
            <person name="Kobayashi T."/>
            <person name="Takeuchi M."/>
            <person name="Denning D.W."/>
            <person name="Galagan J.E."/>
            <person name="Nierman W.C."/>
            <person name="Yu J."/>
            <person name="Archer D.B."/>
            <person name="Bennett J.W."/>
            <person name="Bhatnagar D."/>
            <person name="Cleveland T.E."/>
            <person name="Fedorova N.D."/>
            <person name="Gotoh O."/>
            <person name="Horikawa H."/>
            <person name="Hosoyama A."/>
            <person name="Ichinomiya M."/>
            <person name="Igarashi R."/>
            <person name="Iwashita K."/>
            <person name="Juvvadi P.R."/>
            <person name="Kato M."/>
            <person name="Kato Y."/>
            <person name="Kin T."/>
            <person name="Kokubun A."/>
            <person name="Maeda H."/>
            <person name="Maeyama N."/>
            <person name="Maruyama J."/>
            <person name="Nagasaki H."/>
            <person name="Nakajima T."/>
            <person name="Oda K."/>
            <person name="Okada K."/>
            <person name="Paulsen I."/>
            <person name="Sakamoto K."/>
            <person name="Sawano T."/>
            <person name="Takahashi M."/>
            <person name="Takase K."/>
            <person name="Terabayashi Y."/>
            <person name="Wortman J.R."/>
            <person name="Yamada O."/>
            <person name="Yamagata Y."/>
            <person name="Anazawa H."/>
            <person name="Hata Y."/>
            <person name="Koide Y."/>
            <person name="Komori T."/>
            <person name="Koyama Y."/>
            <person name="Minetoki T."/>
            <person name="Suharnan S."/>
            <person name="Tanaka A."/>
            <person name="Isono K."/>
            <person name="Kuhara S."/>
            <person name="Ogasawara N."/>
            <person name="Kikuchi H."/>
        </authorList>
    </citation>
    <scope>NUCLEOTIDE SEQUENCE [LARGE SCALE GENOMIC DNA]</scope>
    <source>
        <strain>ATCC 42149 / RIB 40</strain>
    </source>
</reference>
<reference key="2">
    <citation type="journal article" date="2013" name="FEBS Lett.">
        <title>Phylogenetic analysis and substrate specificity of GH2 beta-mannosidases from Aspergillus species.</title>
        <authorList>
            <person name="Reddy S.K."/>
            <person name="Rosengren A."/>
            <person name="Klaubauf S."/>
            <person name="Kulkarni T."/>
            <person name="Karlsson E.N."/>
            <person name="de Vries R.P."/>
            <person name="Stalbrand H."/>
        </authorList>
    </citation>
    <scope>GENE MODEL REVISION</scope>
</reference>
<organism>
    <name type="scientific">Aspergillus oryzae (strain ATCC 42149 / RIB 40)</name>
    <name type="common">Yellow koji mold</name>
    <dbReference type="NCBI Taxonomy" id="510516"/>
    <lineage>
        <taxon>Eukaryota</taxon>
        <taxon>Fungi</taxon>
        <taxon>Dikarya</taxon>
        <taxon>Ascomycota</taxon>
        <taxon>Pezizomycotina</taxon>
        <taxon>Eurotiomycetes</taxon>
        <taxon>Eurotiomycetidae</taxon>
        <taxon>Eurotiales</taxon>
        <taxon>Aspergillaceae</taxon>
        <taxon>Aspergillus</taxon>
        <taxon>Aspergillus subgen. Circumdati</taxon>
    </lineage>
</organism>
<dbReference type="EC" id="3.2.1.25"/>
<dbReference type="EMBL" id="BA000056">
    <property type="protein sequence ID" value="BAE66106.1"/>
    <property type="status" value="ALT_SEQ"/>
    <property type="molecule type" value="Genomic_DNA"/>
</dbReference>
<dbReference type="RefSeq" id="XP_001827239.2">
    <property type="nucleotide sequence ID" value="XM_001827187.2"/>
</dbReference>
<dbReference type="SMR" id="Q2TXB7"/>
<dbReference type="STRING" id="510516.Q2TXB7"/>
<dbReference type="ChEMBL" id="CHEMBL4155"/>
<dbReference type="CAZy" id="GH2">
    <property type="family name" value="Glycoside Hydrolase Family 2"/>
</dbReference>
<dbReference type="VEuPathDB" id="FungiDB:AO090010000208"/>
<dbReference type="UniPathway" id="UPA00280"/>
<dbReference type="PRO" id="PR:Q2TXB7"/>
<dbReference type="Proteomes" id="UP000006564">
    <property type="component" value="Chromosome 8"/>
</dbReference>
<dbReference type="GO" id="GO:0004567">
    <property type="term" value="F:beta-mannosidase activity"/>
    <property type="evidence" value="ECO:0007669"/>
    <property type="project" value="UniProtKB-EC"/>
</dbReference>
<dbReference type="GO" id="GO:0006516">
    <property type="term" value="P:glycoprotein catabolic process"/>
    <property type="evidence" value="ECO:0007669"/>
    <property type="project" value="TreeGrafter"/>
</dbReference>
<dbReference type="GO" id="GO:0000272">
    <property type="term" value="P:polysaccharide catabolic process"/>
    <property type="evidence" value="ECO:0007669"/>
    <property type="project" value="UniProtKB-KW"/>
</dbReference>
<dbReference type="FunFam" id="2.60.120.260:FF:000118">
    <property type="entry name" value="Beta-mannosidase B"/>
    <property type="match status" value="1"/>
</dbReference>
<dbReference type="FunFam" id="3.20.20.80:FF:000050">
    <property type="entry name" value="Beta-mannosidase B"/>
    <property type="match status" value="1"/>
</dbReference>
<dbReference type="FunFam" id="2.60.40.10:FF:001725">
    <property type="entry name" value="Exo-beta-D-glucosaminidase"/>
    <property type="match status" value="1"/>
</dbReference>
<dbReference type="Gene3D" id="2.60.120.260">
    <property type="entry name" value="Galactose-binding domain-like"/>
    <property type="match status" value="1"/>
</dbReference>
<dbReference type="Gene3D" id="3.20.20.80">
    <property type="entry name" value="Glycosidases"/>
    <property type="match status" value="1"/>
</dbReference>
<dbReference type="Gene3D" id="2.60.40.10">
    <property type="entry name" value="Immunoglobulins"/>
    <property type="match status" value="1"/>
</dbReference>
<dbReference type="InterPro" id="IPR036156">
    <property type="entry name" value="Beta-gal/glucu_dom_sf"/>
</dbReference>
<dbReference type="InterPro" id="IPR054593">
    <property type="entry name" value="Beta-mannosidase-like_N2"/>
</dbReference>
<dbReference type="InterPro" id="IPR050887">
    <property type="entry name" value="Beta-mannosidase_GH2"/>
</dbReference>
<dbReference type="InterPro" id="IPR008979">
    <property type="entry name" value="Galactose-bd-like_sf"/>
</dbReference>
<dbReference type="InterPro" id="IPR006102">
    <property type="entry name" value="Glyco_hydro_2_Ig-like"/>
</dbReference>
<dbReference type="InterPro" id="IPR017853">
    <property type="entry name" value="Glycoside_hydrolase_SF"/>
</dbReference>
<dbReference type="InterPro" id="IPR013783">
    <property type="entry name" value="Ig-like_fold"/>
</dbReference>
<dbReference type="InterPro" id="IPR041447">
    <property type="entry name" value="Mannosidase_ig"/>
</dbReference>
<dbReference type="PANTHER" id="PTHR43730">
    <property type="entry name" value="BETA-MANNOSIDASE"/>
    <property type="match status" value="1"/>
</dbReference>
<dbReference type="PANTHER" id="PTHR43730:SF1">
    <property type="entry name" value="BETA-MANNOSIDASE"/>
    <property type="match status" value="1"/>
</dbReference>
<dbReference type="Pfam" id="PF00703">
    <property type="entry name" value="Glyco_hydro_2"/>
    <property type="match status" value="1"/>
</dbReference>
<dbReference type="Pfam" id="PF22666">
    <property type="entry name" value="Glyco_hydro_2_N2"/>
    <property type="match status" value="1"/>
</dbReference>
<dbReference type="Pfam" id="PF17786">
    <property type="entry name" value="Mannosidase_ig"/>
    <property type="match status" value="1"/>
</dbReference>
<dbReference type="SUPFAM" id="SSF51445">
    <property type="entry name" value="(Trans)glycosidases"/>
    <property type="match status" value="1"/>
</dbReference>
<dbReference type="SUPFAM" id="SSF49303">
    <property type="entry name" value="beta-Galactosidase/glucuronidase domain"/>
    <property type="match status" value="2"/>
</dbReference>
<dbReference type="SUPFAM" id="SSF49785">
    <property type="entry name" value="Galactose-binding domain-like"/>
    <property type="match status" value="1"/>
</dbReference>
<gene>
    <name type="primary">mndB</name>
    <name type="ORF">AO090010000208</name>
</gene>
<protein>
    <recommendedName>
        <fullName>Beta-mannosidase B</fullName>
        <ecNumber>3.2.1.25</ecNumber>
    </recommendedName>
    <alternativeName>
        <fullName>Mannanase B</fullName>
        <shortName>Mannase B</shortName>
    </alternativeName>
</protein>
<feature type="chain" id="PRO_0000394656" description="Beta-mannosidase B">
    <location>
        <begin position="1"/>
        <end position="844"/>
    </location>
</feature>
<feature type="active site" description="Proton donor" evidence="1">
    <location>
        <position position="432"/>
    </location>
</feature>
<proteinExistence type="inferred from homology"/>
<sequence>MAAFSQYPLSTGWSFKDSDDQSPEAWMPVPVVPSVAHQDLQANQKLKNPYIGFNELDARWVNDKSWTYRTVFQKPAVAAGSSIILAFDGLDTFATVKLDGSVILQSDNMFLAHRVDVTKALEAEGDHVLEIDFDCAMRRARELREKDTKHNWASFNGDPARMAVRKAQYHWGWDWGPLLSTAGIWREVRLEVYSAKISDLWTEVELASDHQTARVSAFAEVDAADSVDSYKASFLLSLHGKEVAREVATLKDKVANVTFDVTQPSLWWPNGYGDPALYEISVSLEKEDCEIHSVSKKIGIRTAELIQQPDRHGKSFFFRINGVDVFCGGSCWIPADNLLPSITAERYRKWIELMVAGRQVMIRVWGGGCYEDDSFYQACDELGVLVWQDFMFGCGNYPTWPELLESIEKEANYNVRRLRHHPSIVVYVGNNEDYQVQESAGLVYDYEDKNPENWLKTDFPARYIYEKLLPSVVEKLSPKTVYHPGSPWGDGKITSDPTVGDMHQWNVWHGTQEKYQIFDTLGGRFNSEFGMEAFPHMSTIEYFVENEADKYPQSHVLDFHNKADGHERRIATYLVENLRTATDLETYVYLTQVVQAETMMFGYRGWRRQWGDERHCGGALLWQLNDCWPTISWAIVDYFLRPKPAFYAVARVLKPIAVGVRREHHDWSVTHAQPPKTSKYELWIASSLQKETVGTIELRFLSVNTGLDVRAPILRDNVKIVPNGTTNILEGVIDHKAQPEPHVLAARLWVDGEVTARDVDWPQPFKYLDLSDRGLEVNKVSESGNEQKLLITAKKPVKCLVFEERDGIRVSDSAMDIVPGDGQTVTVTGLKAGDAPLKYKYLGQ</sequence>
<name>MANBB_ASPOR</name>
<evidence type="ECO:0000250" key="1"/>
<evidence type="ECO:0000305" key="2"/>
<comment type="function">
    <text evidence="1">Exoglycosidase that cleaves the single beta-linked mannose residue from the non-reducing end of beta-mannosidic oligosaccharides of various complexity and length. Prefers mannobiose over mannotriose and has no activity against polymeric mannan. Is also severely restricted by galactosyl substitutions at the +1 subsite (By similarity).</text>
</comment>
<comment type="catalytic activity">
    <reaction>
        <text>Hydrolysis of terminal, non-reducing beta-D-mannose residues in beta-D-mannosides.</text>
        <dbReference type="EC" id="3.2.1.25"/>
    </reaction>
</comment>
<comment type="pathway">
    <text>Glycan metabolism; N-glycan degradation.</text>
</comment>
<comment type="miscellaneous">
    <text evidence="1">In contrast to clade A beta-mannosidases, which are likely secreted, clade B proteins appear to be intracellular.</text>
</comment>
<comment type="similarity">
    <text evidence="2">Belongs to the glycosyl hydrolase 2 family. Beta-mannosidase B subfamily.</text>
</comment>
<comment type="sequence caution" evidence="2">
    <conflict type="erroneous gene model prediction">
        <sequence resource="EMBL-CDS" id="BAE66106"/>
    </conflict>
</comment>